<proteinExistence type="inferred from homology"/>
<organism>
    <name type="scientific">Schizosaccharomyces pombe (strain 972 / ATCC 24843)</name>
    <name type="common">Fission yeast</name>
    <dbReference type="NCBI Taxonomy" id="284812"/>
    <lineage>
        <taxon>Eukaryota</taxon>
        <taxon>Fungi</taxon>
        <taxon>Dikarya</taxon>
        <taxon>Ascomycota</taxon>
        <taxon>Taphrinomycotina</taxon>
        <taxon>Schizosaccharomycetes</taxon>
        <taxon>Schizosaccharomycetales</taxon>
        <taxon>Schizosaccharomycetaceae</taxon>
        <taxon>Schizosaccharomyces</taxon>
    </lineage>
</organism>
<sequence>MASSFPALQFKVVARCSTTRARVTDIQLPHGLVESPVFMPVGTQASLKGVLPEQLDALGCKIMLNNTYHLGLKPGQEVLDTVGGAHRFQSWNKNILTDSGGFQMVSLLKLATITEDGVTFLSPRDGTPMLLTPEHSISLQNSIGSDIMMQLDDVVHTLTESKRMEEAMYRSIRWLDRCIQAHKRPETQNLFCIIQGGLDKRLREICCREMVKRNTPGIAVGGLSGGEEKHAFCETVYTCTSILPDNKPRYLMGVGYAEDLVVCVALGMDMFDCVYPTRTARFGNALTRKGVINLRNQKFRNDIGPLEEGCSCPCCKTELEGGWGITRAYFNSLVSKETVGANLMTIHNVHFQLQLMRDMRESIIKDEFPSFVKNFFHEWNHGDKSNYPSWAVDALRMVNIDLLA</sequence>
<gene>
    <name type="ORF">SPAC1687.19c</name>
</gene>
<name>TGT_SCHPO</name>
<reference key="1">
    <citation type="journal article" date="2002" name="Nature">
        <title>The genome sequence of Schizosaccharomyces pombe.</title>
        <authorList>
            <person name="Wood V."/>
            <person name="Gwilliam R."/>
            <person name="Rajandream M.A."/>
            <person name="Lyne M.H."/>
            <person name="Lyne R."/>
            <person name="Stewart A."/>
            <person name="Sgouros J.G."/>
            <person name="Peat N."/>
            <person name="Hayles J."/>
            <person name="Baker S.G."/>
            <person name="Basham D."/>
            <person name="Bowman S."/>
            <person name="Brooks K."/>
            <person name="Brown D."/>
            <person name="Brown S."/>
            <person name="Chillingworth T."/>
            <person name="Churcher C.M."/>
            <person name="Collins M."/>
            <person name="Connor R."/>
            <person name="Cronin A."/>
            <person name="Davis P."/>
            <person name="Feltwell T."/>
            <person name="Fraser A."/>
            <person name="Gentles S."/>
            <person name="Goble A."/>
            <person name="Hamlin N."/>
            <person name="Harris D.E."/>
            <person name="Hidalgo J."/>
            <person name="Hodgson G."/>
            <person name="Holroyd S."/>
            <person name="Hornsby T."/>
            <person name="Howarth S."/>
            <person name="Huckle E.J."/>
            <person name="Hunt S."/>
            <person name="Jagels K."/>
            <person name="James K.D."/>
            <person name="Jones L."/>
            <person name="Jones M."/>
            <person name="Leather S."/>
            <person name="McDonald S."/>
            <person name="McLean J."/>
            <person name="Mooney P."/>
            <person name="Moule S."/>
            <person name="Mungall K.L."/>
            <person name="Murphy L.D."/>
            <person name="Niblett D."/>
            <person name="Odell C."/>
            <person name="Oliver K."/>
            <person name="O'Neil S."/>
            <person name="Pearson D."/>
            <person name="Quail M.A."/>
            <person name="Rabbinowitsch E."/>
            <person name="Rutherford K.M."/>
            <person name="Rutter S."/>
            <person name="Saunders D."/>
            <person name="Seeger K."/>
            <person name="Sharp S."/>
            <person name="Skelton J."/>
            <person name="Simmonds M.N."/>
            <person name="Squares R."/>
            <person name="Squares S."/>
            <person name="Stevens K."/>
            <person name="Taylor K."/>
            <person name="Taylor R.G."/>
            <person name="Tivey A."/>
            <person name="Walsh S.V."/>
            <person name="Warren T."/>
            <person name="Whitehead S."/>
            <person name="Woodward J.R."/>
            <person name="Volckaert G."/>
            <person name="Aert R."/>
            <person name="Robben J."/>
            <person name="Grymonprez B."/>
            <person name="Weltjens I."/>
            <person name="Vanstreels E."/>
            <person name="Rieger M."/>
            <person name="Schaefer M."/>
            <person name="Mueller-Auer S."/>
            <person name="Gabel C."/>
            <person name="Fuchs M."/>
            <person name="Duesterhoeft A."/>
            <person name="Fritzc C."/>
            <person name="Holzer E."/>
            <person name="Moestl D."/>
            <person name="Hilbert H."/>
            <person name="Borzym K."/>
            <person name="Langer I."/>
            <person name="Beck A."/>
            <person name="Lehrach H."/>
            <person name="Reinhardt R."/>
            <person name="Pohl T.M."/>
            <person name="Eger P."/>
            <person name="Zimmermann W."/>
            <person name="Wedler H."/>
            <person name="Wambutt R."/>
            <person name="Purnelle B."/>
            <person name="Goffeau A."/>
            <person name="Cadieu E."/>
            <person name="Dreano S."/>
            <person name="Gloux S."/>
            <person name="Lelaure V."/>
            <person name="Mottier S."/>
            <person name="Galibert F."/>
            <person name="Aves S.J."/>
            <person name="Xiang Z."/>
            <person name="Hunt C."/>
            <person name="Moore K."/>
            <person name="Hurst S.M."/>
            <person name="Lucas M."/>
            <person name="Rochet M."/>
            <person name="Gaillardin C."/>
            <person name="Tallada V.A."/>
            <person name="Garzon A."/>
            <person name="Thode G."/>
            <person name="Daga R.R."/>
            <person name="Cruzado L."/>
            <person name="Jimenez J."/>
            <person name="Sanchez M."/>
            <person name="del Rey F."/>
            <person name="Benito J."/>
            <person name="Dominguez A."/>
            <person name="Revuelta J.L."/>
            <person name="Moreno S."/>
            <person name="Armstrong J."/>
            <person name="Forsburg S.L."/>
            <person name="Cerutti L."/>
            <person name="Lowe T."/>
            <person name="McCombie W.R."/>
            <person name="Paulsen I."/>
            <person name="Potashkin J."/>
            <person name="Shpakovski G.V."/>
            <person name="Ussery D."/>
            <person name="Barrell B.G."/>
            <person name="Nurse P."/>
        </authorList>
    </citation>
    <scope>NUCLEOTIDE SEQUENCE [LARGE SCALE GENOMIC DNA]</scope>
    <source>
        <strain>972 / ATCC 24843</strain>
    </source>
</reference>
<reference key="2">
    <citation type="journal article" date="2006" name="Nat. Biotechnol.">
        <title>ORFeome cloning and global analysis of protein localization in the fission yeast Schizosaccharomyces pombe.</title>
        <authorList>
            <person name="Matsuyama A."/>
            <person name="Arai R."/>
            <person name="Yashiroda Y."/>
            <person name="Shirai A."/>
            <person name="Kamata A."/>
            <person name="Sekido S."/>
            <person name="Kobayashi Y."/>
            <person name="Hashimoto A."/>
            <person name="Hamamoto M."/>
            <person name="Hiraoka Y."/>
            <person name="Horinouchi S."/>
            <person name="Yoshida M."/>
        </authorList>
    </citation>
    <scope>SUBCELLULAR LOCATION [LARGE SCALE ANALYSIS]</scope>
</reference>
<reference key="3">
    <citation type="journal article" date="2014" name="ACS Chem. Biol.">
        <title>Plant, animal, and fungal micronutrient queuosine is salvaged by members of the DUF2419 protein family.</title>
        <authorList>
            <person name="Zallot R."/>
            <person name="Brochier-Armanet C."/>
            <person name="Gaston K.W."/>
            <person name="Forouhar F."/>
            <person name="Limbach P.A."/>
            <person name="Hunt J.F."/>
            <person name="de Crecy-Lagard V."/>
        </authorList>
    </citation>
    <scope>FUNCTION</scope>
    <scope>PATHWAY</scope>
    <scope>DISRUPTION PHENOTYPE</scope>
</reference>
<protein>
    <recommendedName>
        <fullName evidence="1">Queuine tRNA-ribosyltransferase catalytic subunit</fullName>
        <ecNumber evidence="1">2.4.2.64</ecNumber>
    </recommendedName>
    <alternativeName>
        <fullName evidence="1">Guanine insertion enzyme</fullName>
    </alternativeName>
    <alternativeName>
        <fullName evidence="1">tRNA-guanine transglycosylase</fullName>
    </alternativeName>
</protein>
<dbReference type="EC" id="2.4.2.64" evidence="1"/>
<dbReference type="EMBL" id="CU329670">
    <property type="protein sequence ID" value="CAA22613.1"/>
    <property type="molecule type" value="Genomic_DNA"/>
</dbReference>
<dbReference type="PIR" id="T37762">
    <property type="entry name" value="T37762"/>
</dbReference>
<dbReference type="SMR" id="O94460"/>
<dbReference type="BioGRID" id="278609">
    <property type="interactions" value="3"/>
</dbReference>
<dbReference type="FunCoup" id="O94460">
    <property type="interactions" value="219"/>
</dbReference>
<dbReference type="STRING" id="284812.O94460"/>
<dbReference type="PaxDb" id="4896-SPAC1687.19c.1"/>
<dbReference type="EnsemblFungi" id="SPAC1687.19c.1">
    <property type="protein sequence ID" value="SPAC1687.19c.1:pep"/>
    <property type="gene ID" value="SPAC1687.19c"/>
</dbReference>
<dbReference type="KEGG" id="spo:2542133"/>
<dbReference type="PomBase" id="SPAC1687.19c"/>
<dbReference type="VEuPathDB" id="FungiDB:SPAC1687.19c"/>
<dbReference type="eggNOG" id="KOG3908">
    <property type="taxonomic scope" value="Eukaryota"/>
</dbReference>
<dbReference type="HOGENOM" id="CLU_022060_0_1_1"/>
<dbReference type="InParanoid" id="O94460"/>
<dbReference type="OMA" id="IDLFDCV"/>
<dbReference type="PhylomeDB" id="O94460"/>
<dbReference type="PRO" id="PR:O94460"/>
<dbReference type="Proteomes" id="UP000002485">
    <property type="component" value="Chromosome I"/>
</dbReference>
<dbReference type="GO" id="GO:0005829">
    <property type="term" value="C:cytosol"/>
    <property type="evidence" value="ECO:0007005"/>
    <property type="project" value="PomBase"/>
</dbReference>
<dbReference type="GO" id="GO:0005634">
    <property type="term" value="C:nucleus"/>
    <property type="evidence" value="ECO:0007005"/>
    <property type="project" value="PomBase"/>
</dbReference>
<dbReference type="GO" id="GO:0046872">
    <property type="term" value="F:metal ion binding"/>
    <property type="evidence" value="ECO:0007669"/>
    <property type="project" value="UniProtKB-KW"/>
</dbReference>
<dbReference type="GO" id="GO:0008479">
    <property type="term" value="F:tRNA-guanosine(34) queuine transglycosylase activity"/>
    <property type="evidence" value="ECO:0000318"/>
    <property type="project" value="GO_Central"/>
</dbReference>
<dbReference type="GO" id="GO:0101030">
    <property type="term" value="P:tRNA-guanine transglycosylation"/>
    <property type="evidence" value="ECO:0000315"/>
    <property type="project" value="PomBase"/>
</dbReference>
<dbReference type="Gene3D" id="3.20.20.105">
    <property type="entry name" value="Queuine tRNA-ribosyltransferase-like"/>
    <property type="match status" value="1"/>
</dbReference>
<dbReference type="HAMAP" id="MF_00168">
    <property type="entry name" value="Q_tRNA_Tgt"/>
    <property type="match status" value="1"/>
</dbReference>
<dbReference type="InterPro" id="IPR004803">
    <property type="entry name" value="TGT"/>
</dbReference>
<dbReference type="InterPro" id="IPR036511">
    <property type="entry name" value="TGT-like_sf"/>
</dbReference>
<dbReference type="InterPro" id="IPR002616">
    <property type="entry name" value="tRNA_ribo_trans-like"/>
</dbReference>
<dbReference type="NCBIfam" id="TIGR00430">
    <property type="entry name" value="Q_tRNA_tgt"/>
    <property type="match status" value="1"/>
</dbReference>
<dbReference type="NCBIfam" id="TIGR00449">
    <property type="entry name" value="tgt_general"/>
    <property type="match status" value="1"/>
</dbReference>
<dbReference type="PANTHER" id="PTHR43530">
    <property type="entry name" value="QUEUINE TRNA-RIBOSYLTRANSFERASE CATALYTIC SUBUNIT 1"/>
    <property type="match status" value="1"/>
</dbReference>
<dbReference type="PANTHER" id="PTHR43530:SF1">
    <property type="entry name" value="QUEUINE TRNA-RIBOSYLTRANSFERASE CATALYTIC SUBUNIT 1"/>
    <property type="match status" value="1"/>
</dbReference>
<dbReference type="Pfam" id="PF01702">
    <property type="entry name" value="TGT"/>
    <property type="match status" value="1"/>
</dbReference>
<dbReference type="SUPFAM" id="SSF51713">
    <property type="entry name" value="tRNA-guanine transglycosylase"/>
    <property type="match status" value="1"/>
</dbReference>
<keyword id="KW-0963">Cytoplasm</keyword>
<keyword id="KW-0328">Glycosyltransferase</keyword>
<keyword id="KW-0479">Metal-binding</keyword>
<keyword id="KW-0539">Nucleus</keyword>
<keyword id="KW-1185">Reference proteome</keyword>
<keyword id="KW-0808">Transferase</keyword>
<keyword id="KW-0819">tRNA processing</keyword>
<keyword id="KW-0862">Zinc</keyword>
<accession>O94460</accession>
<evidence type="ECO:0000255" key="1">
    <source>
        <dbReference type="HAMAP-Rule" id="MF_03218"/>
    </source>
</evidence>
<evidence type="ECO:0000269" key="2">
    <source>
    </source>
</evidence>
<evidence type="ECO:0000269" key="3">
    <source>
    </source>
</evidence>
<evidence type="ECO:0000305" key="4">
    <source>
    </source>
</evidence>
<feature type="chain" id="PRO_0000135569" description="Queuine tRNA-ribosyltransferase catalytic subunit">
    <location>
        <begin position="1"/>
        <end position="404"/>
    </location>
</feature>
<feature type="region of interest" description="RNA binding" evidence="1">
    <location>
        <begin position="253"/>
        <end position="259"/>
    </location>
</feature>
<feature type="region of interest" description="RNA binding; important for wobble base 34 recognition" evidence="1">
    <location>
        <begin position="277"/>
        <end position="281"/>
    </location>
</feature>
<feature type="active site" description="Proton acceptor" evidence="1">
    <location>
        <position position="98"/>
    </location>
</feature>
<feature type="active site" description="Nucleophile" evidence="1">
    <location>
        <position position="272"/>
    </location>
</feature>
<feature type="binding site" evidence="1">
    <location>
        <begin position="98"/>
        <end position="102"/>
    </location>
    <ligand>
        <name>substrate</name>
    </ligand>
</feature>
<feature type="binding site" evidence="1">
    <location>
        <position position="152"/>
    </location>
    <ligand>
        <name>substrate</name>
    </ligand>
</feature>
<feature type="binding site" evidence="1">
    <location>
        <position position="195"/>
    </location>
    <ligand>
        <name>substrate</name>
    </ligand>
</feature>
<feature type="binding site" evidence="1">
    <location>
        <position position="222"/>
    </location>
    <ligand>
        <name>substrate</name>
    </ligand>
</feature>
<feature type="binding site" evidence="1">
    <location>
        <position position="310"/>
    </location>
    <ligand>
        <name>Zn(2+)</name>
        <dbReference type="ChEBI" id="CHEBI:29105"/>
    </ligand>
</feature>
<feature type="binding site" evidence="1">
    <location>
        <position position="312"/>
    </location>
    <ligand>
        <name>Zn(2+)</name>
        <dbReference type="ChEBI" id="CHEBI:29105"/>
    </ligand>
</feature>
<feature type="binding site" evidence="1">
    <location>
        <position position="315"/>
    </location>
    <ligand>
        <name>Zn(2+)</name>
        <dbReference type="ChEBI" id="CHEBI:29105"/>
    </ligand>
</feature>
<feature type="binding site" evidence="1">
    <location>
        <position position="347"/>
    </location>
    <ligand>
        <name>Zn(2+)</name>
        <dbReference type="ChEBI" id="CHEBI:29105"/>
    </ligand>
</feature>
<comment type="function">
    <text evidence="1 4">Catalytic subunit of the queuine tRNA-ribosyltransferase (TGT) that catalyzes the base-exchange of a guanine (G) residue with queuine (Q) at position 34 (anticodon wobble position) in tRNAs with GU(N) anticodons (tRNA-Asp, -Asn, -His and -Tyr), resulting in the hypermodified nucleoside queuosine (7-(((4,5-cis-dihydroxy-2-cyclopenten-1-yl)amino)methyl)-7-deazaguanosine) (PubMed:24911101). Catalysis occurs through a double-displacement mechanism. The nucleophile active site attacks the C1' of nucleotide 34 to detach the guanine base from the RNA, forming a covalent enzyme-RNA intermediate. The proton acceptor active site deprotonates the incoming queuine, allowing a nucleophilic attack on the C1' of the ribose to form the product.</text>
</comment>
<comment type="catalytic activity">
    <reaction evidence="1 4">
        <text>guanosine(34) in tRNA + queuine = queuosine(34) in tRNA + guanine</text>
        <dbReference type="Rhea" id="RHEA:16633"/>
        <dbReference type="Rhea" id="RHEA-COMP:10341"/>
        <dbReference type="Rhea" id="RHEA-COMP:18571"/>
        <dbReference type="ChEBI" id="CHEBI:16235"/>
        <dbReference type="ChEBI" id="CHEBI:17433"/>
        <dbReference type="ChEBI" id="CHEBI:74269"/>
        <dbReference type="ChEBI" id="CHEBI:194431"/>
        <dbReference type="EC" id="2.4.2.64"/>
    </reaction>
</comment>
<comment type="cofactor">
    <cofactor evidence="1">
        <name>Zn(2+)</name>
        <dbReference type="ChEBI" id="CHEBI:29105"/>
    </cofactor>
</comment>
<comment type="subunit">
    <text evidence="1">Heterodimer of a catalytic subunit and an accessory subunit.</text>
</comment>
<comment type="subcellular location">
    <subcellularLocation>
        <location evidence="1 2">Cytoplasm</location>
    </subcellularLocation>
    <subcellularLocation>
        <location evidence="2">Nucleus</location>
    </subcellularLocation>
</comment>
<comment type="disruption phenotype">
    <text evidence="3">Lacks queuosine in tRNA(Asp).</text>
</comment>
<comment type="similarity">
    <text evidence="1">Belongs to the queuine tRNA-ribosyltransferase family.</text>
</comment>